<comment type="function">
    <text evidence="1">The antigen 85 proteins (FbpA, FbpB, FbpC) are responsible for the high affinity of mycobacteria for fibronectin, a large adhesive glycoprotein. They also help to maintain the integrity of the cell wall by catalyzing the transfer of mycolic acids to cell wall arabinogalactan and through the synthesis of alpha,alpha-trehalose dimycolate (TDM, cord factor). They catalyze the transfer of a mycoloyl residue from one molecule of alpha,alpha-trehalose monomycolate (TMM) to another TMM, leading to the formation of TDM (By similarity).</text>
</comment>
<comment type="catalytic activity">
    <reaction>
        <text>2 alpha,alpha'-trehalose 6-mycolate = alpha,alpha'-trehalose 6,6'-bismycolate + alpha,alpha-trehalose</text>
        <dbReference type="Rhea" id="RHEA:23472"/>
        <dbReference type="ChEBI" id="CHEBI:16551"/>
        <dbReference type="ChEBI" id="CHEBI:18195"/>
        <dbReference type="ChEBI" id="CHEBI:18234"/>
        <dbReference type="EC" id="2.3.1.122"/>
    </reaction>
</comment>
<comment type="catalytic activity">
    <reaction>
        <text>an acyl-CoA + a 1,2-diacyl-sn-glycerol = a triacyl-sn-glycerol + CoA</text>
        <dbReference type="Rhea" id="RHEA:10868"/>
        <dbReference type="ChEBI" id="CHEBI:17815"/>
        <dbReference type="ChEBI" id="CHEBI:57287"/>
        <dbReference type="ChEBI" id="CHEBI:58342"/>
        <dbReference type="ChEBI" id="CHEBI:64615"/>
        <dbReference type="EC" id="2.3.1.20"/>
    </reaction>
</comment>
<comment type="subcellular location">
    <subcellularLocation>
        <location evidence="1">Secreted</location>
    </subcellularLocation>
</comment>
<comment type="induction">
    <text evidence="3">Expression depends on the two-component regulatory system MtrA/MtrB.</text>
</comment>
<comment type="similarity">
    <text evidence="4">Belongs to the mycobacterial A85 antigen family.</text>
</comment>
<evidence type="ECO:0000250" key="1"/>
<evidence type="ECO:0000255" key="2"/>
<evidence type="ECO:0000269" key="3">
    <source>
    </source>
</evidence>
<evidence type="ECO:0000305" key="4"/>
<accession>A0QU51</accession>
<feature type="signal peptide" evidence="2">
    <location>
        <begin position="1"/>
        <end position="38"/>
    </location>
</feature>
<feature type="chain" id="PRO_0000421121" description="Diacylglycerol acyltransferase/mycolyltransferase Ag85B">
    <location>
        <begin position="39"/>
        <end position="325"/>
    </location>
</feature>
<feature type="region of interest" description="Fibronectin-binding" evidence="1">
    <location>
        <begin position="98"/>
        <end position="108"/>
    </location>
</feature>
<feature type="active site" description="Nucleophile" evidence="1">
    <location>
        <position position="166"/>
    </location>
</feature>
<feature type="active site" evidence="1">
    <location>
        <position position="272"/>
    </location>
</feature>
<feature type="active site" evidence="1">
    <location>
        <position position="304"/>
    </location>
</feature>
<feature type="binding site" evidence="1">
    <location>
        <begin position="82"/>
        <end position="83"/>
    </location>
    <ligand>
        <name>substrate</name>
    </ligand>
</feature>
<feature type="binding site" evidence="1">
    <location>
        <position position="166"/>
    </location>
    <ligand>
        <name>substrate</name>
    </ligand>
</feature>
<feature type="binding site" evidence="1">
    <location>
        <begin position="274"/>
        <end position="277"/>
    </location>
    <ligand>
        <name>substrate</name>
    </ligand>
</feature>
<feature type="binding site" evidence="1">
    <location>
        <begin position="304"/>
        <end position="306"/>
    </location>
    <ligand>
        <name>substrate</name>
    </ligand>
</feature>
<feature type="disulfide bond" evidence="1">
    <location>
        <begin position="127"/>
        <end position="132"/>
    </location>
</feature>
<sequence>MTFIDKIRGHWARRMTVAAVAALLLPGLVGVVGGSATAGAFSRPGLPVEYLMVPSPSMGRDIKVQFQSGGPGSHAVYLLDGLRAQDDFNGWDINTNAFEMFLDSGLSVVMPVGGQSSFYSDWYQPACGNNGCVTYKWETFLTSELPEWLAANRDVAATGNAAIGLSMAGSAALILAAYHPDRFIYAGSMSGFLNPSEGWWPFLINISMGDAGGYKANDMWGPTEDPNSAWKRNDPMVQIPRLVANNTRIWVYCGNGQPNELGGGDLPATFLEGLTIRTNETFRDNYIAAGGNNGVFNFPNNGTHNWAYWGRELQAMVPDLQRVLG</sequence>
<reference key="1">
    <citation type="submission" date="2006-10" db="EMBL/GenBank/DDBJ databases">
        <authorList>
            <person name="Fleischmann R.D."/>
            <person name="Dodson R.J."/>
            <person name="Haft D.H."/>
            <person name="Merkel J.S."/>
            <person name="Nelson W.C."/>
            <person name="Fraser C.M."/>
        </authorList>
    </citation>
    <scope>NUCLEOTIDE SEQUENCE [LARGE SCALE GENOMIC DNA]</scope>
    <source>
        <strain>ATCC 700084 / mc(2)155</strain>
    </source>
</reference>
<reference key="2">
    <citation type="journal article" date="2007" name="Genome Biol.">
        <title>Interrupted coding sequences in Mycobacterium smegmatis: authentic mutations or sequencing errors?</title>
        <authorList>
            <person name="Deshayes C."/>
            <person name="Perrodou E."/>
            <person name="Gallien S."/>
            <person name="Euphrasie D."/>
            <person name="Schaeffer C."/>
            <person name="Van-Dorsselaer A."/>
            <person name="Poch O."/>
            <person name="Lecompte O."/>
            <person name="Reyrat J.-M."/>
        </authorList>
    </citation>
    <scope>NUCLEOTIDE SEQUENCE [LARGE SCALE GENOMIC DNA]</scope>
    <source>
        <strain>ATCC 700084 / mc(2)155</strain>
    </source>
</reference>
<reference key="3">
    <citation type="journal article" date="2009" name="Genome Res.">
        <title>Ortho-proteogenomics: multiple proteomes investigation through orthology and a new MS-based protocol.</title>
        <authorList>
            <person name="Gallien S."/>
            <person name="Perrodou E."/>
            <person name="Carapito C."/>
            <person name="Deshayes C."/>
            <person name="Reyrat J.-M."/>
            <person name="Van Dorsselaer A."/>
            <person name="Poch O."/>
            <person name="Schaeffer C."/>
            <person name="Lecompte O."/>
        </authorList>
    </citation>
    <scope>NUCLEOTIDE SEQUENCE [LARGE SCALE GENOMIC DNA]</scope>
    <source>
        <strain>ATCC 700084 / mc(2)155</strain>
    </source>
</reference>
<reference key="4">
    <citation type="journal article" date="2012" name="J. Biol. Chem.">
        <title>Septal localization of the Mycobacterium tuberculosis MtrB sensor kinase promotes MtrA regulon expression.</title>
        <authorList>
            <person name="Plocinska R."/>
            <person name="Purushotham G."/>
            <person name="Sarva K."/>
            <person name="Vadrevu I.S."/>
            <person name="Pandeeti E.V."/>
            <person name="Arora N."/>
            <person name="Plocinski P."/>
            <person name="Madiraju M.V."/>
            <person name="Rajagopalan M."/>
        </authorList>
    </citation>
    <scope>INDUCTION</scope>
    <source>
        <strain>ATCC 700084 / mc(2)155</strain>
    </source>
</reference>
<keyword id="KW-0012">Acyltransferase</keyword>
<keyword id="KW-1015">Disulfide bond</keyword>
<keyword id="KW-1185">Reference proteome</keyword>
<keyword id="KW-0964">Secreted</keyword>
<keyword id="KW-0732">Signal</keyword>
<keyword id="KW-0808">Transferase</keyword>
<gene>
    <name type="primary">fbpB</name>
    <name type="ordered locus">MSMEG_2078</name>
    <name type="ordered locus">MSMEI_2033</name>
</gene>
<dbReference type="EC" id="2.3.1.122"/>
<dbReference type="EC" id="2.3.1.20"/>
<dbReference type="EMBL" id="CP000480">
    <property type="protein sequence ID" value="ABK75892.1"/>
    <property type="molecule type" value="Genomic_DNA"/>
</dbReference>
<dbReference type="EMBL" id="CP001663">
    <property type="protein sequence ID" value="AFP38504.1"/>
    <property type="molecule type" value="Genomic_DNA"/>
</dbReference>
<dbReference type="RefSeq" id="WP_003893447.1">
    <property type="nucleotide sequence ID" value="NZ_SIJM01000021.1"/>
</dbReference>
<dbReference type="RefSeq" id="YP_886439.1">
    <property type="nucleotide sequence ID" value="NC_008596.1"/>
</dbReference>
<dbReference type="SMR" id="A0QU51"/>
<dbReference type="STRING" id="246196.MSMEG_2078"/>
<dbReference type="ESTHER" id="mycs2-a0qu51">
    <property type="family name" value="A85-Mycolyl-transferase"/>
</dbReference>
<dbReference type="PaxDb" id="246196-MSMEI_2033"/>
<dbReference type="KEGG" id="msb:LJ00_10360"/>
<dbReference type="KEGG" id="msg:MSMEI_2033"/>
<dbReference type="KEGG" id="msm:MSMEG_2078"/>
<dbReference type="PATRIC" id="fig|246196.19.peg.2054"/>
<dbReference type="eggNOG" id="COG0627">
    <property type="taxonomic scope" value="Bacteria"/>
</dbReference>
<dbReference type="OrthoDB" id="4366784at2"/>
<dbReference type="Proteomes" id="UP000000757">
    <property type="component" value="Chromosome"/>
</dbReference>
<dbReference type="Proteomes" id="UP000006158">
    <property type="component" value="Chromosome"/>
</dbReference>
<dbReference type="GO" id="GO:0005576">
    <property type="term" value="C:extracellular region"/>
    <property type="evidence" value="ECO:0007669"/>
    <property type="project" value="UniProtKB-SubCell"/>
</dbReference>
<dbReference type="GO" id="GO:0004144">
    <property type="term" value="F:diacylglycerol O-acyltransferase activity"/>
    <property type="evidence" value="ECO:0007669"/>
    <property type="project" value="UniProtKB-EC"/>
</dbReference>
<dbReference type="GO" id="GO:0050348">
    <property type="term" value="F:trehalose O-mycolyltransferase activity"/>
    <property type="evidence" value="ECO:0007669"/>
    <property type="project" value="UniProtKB-EC"/>
</dbReference>
<dbReference type="FunFam" id="3.40.50.1820:FF:000086">
    <property type="entry name" value="Diacylglycerol acyltransferase/mycolyltransferase Ag85C"/>
    <property type="match status" value="1"/>
</dbReference>
<dbReference type="Gene3D" id="3.40.50.1820">
    <property type="entry name" value="alpha/beta hydrolase"/>
    <property type="match status" value="1"/>
</dbReference>
<dbReference type="InterPro" id="IPR029058">
    <property type="entry name" value="AB_hydrolase_fold"/>
</dbReference>
<dbReference type="InterPro" id="IPR000801">
    <property type="entry name" value="Esterase-like"/>
</dbReference>
<dbReference type="InterPro" id="IPR050583">
    <property type="entry name" value="Mycobacterial_A85_antigen"/>
</dbReference>
<dbReference type="PANTHER" id="PTHR48098:SF1">
    <property type="entry name" value="DIACYLGLYCEROL ACYLTRANSFERASE_MYCOLYLTRANSFERASE AG85A"/>
    <property type="match status" value="1"/>
</dbReference>
<dbReference type="PANTHER" id="PTHR48098">
    <property type="entry name" value="ENTEROCHELIN ESTERASE-RELATED"/>
    <property type="match status" value="1"/>
</dbReference>
<dbReference type="Pfam" id="PF00756">
    <property type="entry name" value="Esterase"/>
    <property type="match status" value="1"/>
</dbReference>
<dbReference type="SUPFAM" id="SSF53474">
    <property type="entry name" value="alpha/beta-Hydrolases"/>
    <property type="match status" value="1"/>
</dbReference>
<name>A85B_MYCS2</name>
<organism>
    <name type="scientific">Mycolicibacterium smegmatis (strain ATCC 700084 / mc(2)155)</name>
    <name type="common">Mycobacterium smegmatis</name>
    <dbReference type="NCBI Taxonomy" id="246196"/>
    <lineage>
        <taxon>Bacteria</taxon>
        <taxon>Bacillati</taxon>
        <taxon>Actinomycetota</taxon>
        <taxon>Actinomycetes</taxon>
        <taxon>Mycobacteriales</taxon>
        <taxon>Mycobacteriaceae</taxon>
        <taxon>Mycolicibacterium</taxon>
    </lineage>
</organism>
<protein>
    <recommendedName>
        <fullName>Diacylglycerol acyltransferase/mycolyltransferase Ag85B</fullName>
        <shortName>DGAT</shortName>
        <ecNumber>2.3.1.122</ecNumber>
        <ecNumber>2.3.1.20</ecNumber>
    </recommendedName>
    <alternativeName>
        <fullName>30 kDa extracellular protein</fullName>
    </alternativeName>
    <alternativeName>
        <fullName>Acyl-CoA:diacylglycerol acyltransferase</fullName>
    </alternativeName>
    <alternativeName>
        <fullName>Antigen 85 complex B</fullName>
        <shortName>85B</shortName>
        <shortName>Ag85B</shortName>
    </alternativeName>
    <alternativeName>
        <fullName>Extracellular alpha-antigen</fullName>
    </alternativeName>
    <alternativeName>
        <fullName>Fibronectin-binding protein B</fullName>
        <shortName>Fbps B</shortName>
    </alternativeName>
</protein>
<proteinExistence type="evidence at transcript level"/>